<keyword id="KW-0255">Endonuclease</keyword>
<keyword id="KW-0378">Hydrolase</keyword>
<keyword id="KW-0479">Metal-binding</keyword>
<keyword id="KW-0540">Nuclease</keyword>
<keyword id="KW-1185">Reference proteome</keyword>
<keyword id="KW-0819">tRNA processing</keyword>
<keyword id="KW-0862">Zinc</keyword>
<sequence>MDFELFILGSSSATPSKGRYQSAQLLKIHNDYFMIDCGEAAQYQLSRYKLNHTKISHIFISHLHGDHFFGLVGLLSTMNLYGRKNPIHVFGPPGLDEIIQIQLKYSETLLQFPLHYTTLENEGSEHILDHPLVDVYTIPLEHRIRCNGFLFKEKPKSYKLNKSKLPEDLSLLEIAQLKQGIDVYDENGNVKALVREICMPALKSRSYAYCSDTKVNEQYFPYIKGVDLLYHESTFLDELADRAAKTYHTTAKQAAQVAKEAEAGKLIIGHFSSRYYDTEPFLLEASSIFKHTYLGTEGSSFYVSDRISHEDNS</sequence>
<name>RNZ_CYTH3</name>
<gene>
    <name evidence="1" type="primary">rnz</name>
    <name type="ordered locus">CHU_1914</name>
</gene>
<organism>
    <name type="scientific">Cytophaga hutchinsonii (strain ATCC 33406 / DSM 1761 / CIP 103989 / NBRC 15051 / NCIMB 9469 / D465)</name>
    <dbReference type="NCBI Taxonomy" id="269798"/>
    <lineage>
        <taxon>Bacteria</taxon>
        <taxon>Pseudomonadati</taxon>
        <taxon>Bacteroidota</taxon>
        <taxon>Cytophagia</taxon>
        <taxon>Cytophagales</taxon>
        <taxon>Cytophagaceae</taxon>
        <taxon>Cytophaga</taxon>
    </lineage>
</organism>
<feature type="chain" id="PRO_1000070274" description="Ribonuclease Z">
    <location>
        <begin position="1"/>
        <end position="313"/>
    </location>
</feature>
<feature type="active site" description="Proton acceptor" evidence="1">
    <location>
        <position position="66"/>
    </location>
</feature>
<feature type="binding site" evidence="1">
    <location>
        <position position="62"/>
    </location>
    <ligand>
        <name>Zn(2+)</name>
        <dbReference type="ChEBI" id="CHEBI:29105"/>
        <label>1</label>
        <note>catalytic</note>
    </ligand>
</feature>
<feature type="binding site" evidence="1">
    <location>
        <position position="64"/>
    </location>
    <ligand>
        <name>Zn(2+)</name>
        <dbReference type="ChEBI" id="CHEBI:29105"/>
        <label>1</label>
        <note>catalytic</note>
    </ligand>
</feature>
<feature type="binding site" evidence="1">
    <location>
        <position position="66"/>
    </location>
    <ligand>
        <name>Zn(2+)</name>
        <dbReference type="ChEBI" id="CHEBI:29105"/>
        <label>2</label>
        <note>catalytic</note>
    </ligand>
</feature>
<feature type="binding site" evidence="1">
    <location>
        <position position="67"/>
    </location>
    <ligand>
        <name>Zn(2+)</name>
        <dbReference type="ChEBI" id="CHEBI:29105"/>
        <label>2</label>
        <note>catalytic</note>
    </ligand>
</feature>
<feature type="binding site" evidence="1">
    <location>
        <position position="142"/>
    </location>
    <ligand>
        <name>Zn(2+)</name>
        <dbReference type="ChEBI" id="CHEBI:29105"/>
        <label>1</label>
        <note>catalytic</note>
    </ligand>
</feature>
<feature type="binding site" evidence="1">
    <location>
        <position position="212"/>
    </location>
    <ligand>
        <name>Zn(2+)</name>
        <dbReference type="ChEBI" id="CHEBI:29105"/>
        <label>1</label>
        <note>catalytic</note>
    </ligand>
</feature>
<feature type="binding site" evidence="1">
    <location>
        <position position="212"/>
    </location>
    <ligand>
        <name>Zn(2+)</name>
        <dbReference type="ChEBI" id="CHEBI:29105"/>
        <label>2</label>
        <note>catalytic</note>
    </ligand>
</feature>
<feature type="binding site" evidence="1">
    <location>
        <position position="270"/>
    </location>
    <ligand>
        <name>Zn(2+)</name>
        <dbReference type="ChEBI" id="CHEBI:29105"/>
        <label>2</label>
        <note>catalytic</note>
    </ligand>
</feature>
<comment type="function">
    <text evidence="1">Zinc phosphodiesterase, which displays some tRNA 3'-processing endonuclease activity. Probably involved in tRNA maturation, by removing a 3'-trailer from precursor tRNA.</text>
</comment>
<comment type="catalytic activity">
    <reaction evidence="1">
        <text>Endonucleolytic cleavage of RNA, removing extra 3' nucleotides from tRNA precursor, generating 3' termini of tRNAs. A 3'-hydroxy group is left at the tRNA terminus and a 5'-phosphoryl group is left at the trailer molecule.</text>
        <dbReference type="EC" id="3.1.26.11"/>
    </reaction>
</comment>
<comment type="cofactor">
    <cofactor evidence="1">
        <name>Zn(2+)</name>
        <dbReference type="ChEBI" id="CHEBI:29105"/>
    </cofactor>
    <text evidence="1">Binds 2 Zn(2+) ions.</text>
</comment>
<comment type="subunit">
    <text evidence="1">Homodimer.</text>
</comment>
<comment type="similarity">
    <text evidence="1">Belongs to the RNase Z family.</text>
</comment>
<proteinExistence type="inferred from homology"/>
<evidence type="ECO:0000255" key="1">
    <source>
        <dbReference type="HAMAP-Rule" id="MF_01818"/>
    </source>
</evidence>
<reference key="1">
    <citation type="journal article" date="2007" name="Appl. Environ. Microbiol.">
        <title>Genome sequence of the cellulolytic gliding bacterium Cytophaga hutchinsonii.</title>
        <authorList>
            <person name="Xie G."/>
            <person name="Bruce D.C."/>
            <person name="Challacombe J.F."/>
            <person name="Chertkov O."/>
            <person name="Detter J.C."/>
            <person name="Gilna P."/>
            <person name="Han C.S."/>
            <person name="Lucas S."/>
            <person name="Misra M."/>
            <person name="Myers G.L."/>
            <person name="Richardson P."/>
            <person name="Tapia R."/>
            <person name="Thayer N."/>
            <person name="Thompson L.S."/>
            <person name="Brettin T.S."/>
            <person name="Henrissat B."/>
            <person name="Wilson D.B."/>
            <person name="McBride M.J."/>
        </authorList>
    </citation>
    <scope>NUCLEOTIDE SEQUENCE [LARGE SCALE GENOMIC DNA]</scope>
    <source>
        <strain>ATCC 33406 / DSM 1761 / JCM 20678 / CIP 103989 / IAM 12607 / NBRC 15051 / NCIMB 9469 / D465</strain>
    </source>
</reference>
<accession>Q11TT4</accession>
<dbReference type="EC" id="3.1.26.11" evidence="1"/>
<dbReference type="EMBL" id="CP000383">
    <property type="protein sequence ID" value="ABG59180.1"/>
    <property type="molecule type" value="Genomic_DNA"/>
</dbReference>
<dbReference type="RefSeq" id="WP_011585297.1">
    <property type="nucleotide sequence ID" value="NC_008255.1"/>
</dbReference>
<dbReference type="SMR" id="Q11TT4"/>
<dbReference type="STRING" id="269798.CHU_1914"/>
<dbReference type="KEGG" id="chu:CHU_1914"/>
<dbReference type="eggNOG" id="COG1234">
    <property type="taxonomic scope" value="Bacteria"/>
</dbReference>
<dbReference type="HOGENOM" id="CLU_031317_2_1_10"/>
<dbReference type="OrthoDB" id="9800940at2"/>
<dbReference type="Proteomes" id="UP000001822">
    <property type="component" value="Chromosome"/>
</dbReference>
<dbReference type="GO" id="GO:0042781">
    <property type="term" value="F:3'-tRNA processing endoribonuclease activity"/>
    <property type="evidence" value="ECO:0007669"/>
    <property type="project" value="UniProtKB-UniRule"/>
</dbReference>
<dbReference type="GO" id="GO:0008270">
    <property type="term" value="F:zinc ion binding"/>
    <property type="evidence" value="ECO:0007669"/>
    <property type="project" value="UniProtKB-UniRule"/>
</dbReference>
<dbReference type="CDD" id="cd07717">
    <property type="entry name" value="RNaseZ_ZiPD-like_MBL-fold"/>
    <property type="match status" value="1"/>
</dbReference>
<dbReference type="Gene3D" id="3.60.15.10">
    <property type="entry name" value="Ribonuclease Z/Hydroxyacylglutathione hydrolase-like"/>
    <property type="match status" value="1"/>
</dbReference>
<dbReference type="HAMAP" id="MF_01818">
    <property type="entry name" value="RNase_Z_BN"/>
    <property type="match status" value="1"/>
</dbReference>
<dbReference type="InterPro" id="IPR001279">
    <property type="entry name" value="Metallo-B-lactamas"/>
</dbReference>
<dbReference type="InterPro" id="IPR036866">
    <property type="entry name" value="RibonucZ/Hydroxyglut_hydro"/>
</dbReference>
<dbReference type="InterPro" id="IPR013471">
    <property type="entry name" value="RNase_Z/BN"/>
</dbReference>
<dbReference type="NCBIfam" id="NF000801">
    <property type="entry name" value="PRK00055.1-3"/>
    <property type="match status" value="1"/>
</dbReference>
<dbReference type="PANTHER" id="PTHR46018">
    <property type="entry name" value="ZINC PHOSPHODIESTERASE ELAC PROTEIN 1"/>
    <property type="match status" value="1"/>
</dbReference>
<dbReference type="PANTHER" id="PTHR46018:SF2">
    <property type="entry name" value="ZINC PHOSPHODIESTERASE ELAC PROTEIN 1"/>
    <property type="match status" value="1"/>
</dbReference>
<dbReference type="Pfam" id="PF00753">
    <property type="entry name" value="Lactamase_B"/>
    <property type="match status" value="1"/>
</dbReference>
<dbReference type="SUPFAM" id="SSF56281">
    <property type="entry name" value="Metallo-hydrolase/oxidoreductase"/>
    <property type="match status" value="1"/>
</dbReference>
<protein>
    <recommendedName>
        <fullName evidence="1">Ribonuclease Z</fullName>
        <shortName evidence="1">RNase Z</shortName>
        <ecNumber evidence="1">3.1.26.11</ecNumber>
    </recommendedName>
    <alternativeName>
        <fullName evidence="1">tRNA 3 endonuclease</fullName>
    </alternativeName>
    <alternativeName>
        <fullName evidence="1">tRNase Z</fullName>
    </alternativeName>
</protein>